<keyword id="KW-0066">ATP synthesis</keyword>
<keyword id="KW-0067">ATP-binding</keyword>
<keyword id="KW-0139">CF(1)</keyword>
<keyword id="KW-0150">Chloroplast</keyword>
<keyword id="KW-0375">Hydrogen ion transport</keyword>
<keyword id="KW-0406">Ion transport</keyword>
<keyword id="KW-0472">Membrane</keyword>
<keyword id="KW-0547">Nucleotide-binding</keyword>
<keyword id="KW-0934">Plastid</keyword>
<keyword id="KW-1185">Reference proteome</keyword>
<keyword id="KW-0793">Thylakoid</keyword>
<keyword id="KW-1278">Translocase</keyword>
<keyword id="KW-0813">Transport</keyword>
<evidence type="ECO:0000255" key="1">
    <source>
        <dbReference type="HAMAP-Rule" id="MF_01347"/>
    </source>
</evidence>
<name>ATPB_PHATC</name>
<dbReference type="EC" id="7.1.2.2" evidence="1"/>
<dbReference type="EMBL" id="EF067920">
    <property type="protein sequence ID" value="ABK20630.1"/>
    <property type="molecule type" value="Genomic_DNA"/>
</dbReference>
<dbReference type="RefSeq" id="YP_874407.1">
    <property type="nucleotide sequence ID" value="NC_008588.1"/>
</dbReference>
<dbReference type="SMR" id="A0T0D2"/>
<dbReference type="STRING" id="556484.A0T0D2"/>
<dbReference type="GeneID" id="4524582"/>
<dbReference type="InParanoid" id="A0T0D2"/>
<dbReference type="Proteomes" id="UP000000759">
    <property type="component" value="Chloroplast"/>
</dbReference>
<dbReference type="GO" id="GO:0009535">
    <property type="term" value="C:chloroplast thylakoid membrane"/>
    <property type="evidence" value="ECO:0007669"/>
    <property type="project" value="UniProtKB-SubCell"/>
</dbReference>
<dbReference type="GO" id="GO:0005739">
    <property type="term" value="C:mitochondrion"/>
    <property type="evidence" value="ECO:0007669"/>
    <property type="project" value="GOC"/>
</dbReference>
<dbReference type="GO" id="GO:0045259">
    <property type="term" value="C:proton-transporting ATP synthase complex"/>
    <property type="evidence" value="ECO:0007669"/>
    <property type="project" value="UniProtKB-KW"/>
</dbReference>
<dbReference type="GO" id="GO:0005524">
    <property type="term" value="F:ATP binding"/>
    <property type="evidence" value="ECO:0007669"/>
    <property type="project" value="UniProtKB-UniRule"/>
</dbReference>
<dbReference type="GO" id="GO:0016887">
    <property type="term" value="F:ATP hydrolysis activity"/>
    <property type="evidence" value="ECO:0007669"/>
    <property type="project" value="InterPro"/>
</dbReference>
<dbReference type="GO" id="GO:0046933">
    <property type="term" value="F:proton-transporting ATP synthase activity, rotational mechanism"/>
    <property type="evidence" value="ECO:0007669"/>
    <property type="project" value="UniProtKB-UniRule"/>
</dbReference>
<dbReference type="GO" id="GO:0042776">
    <property type="term" value="P:proton motive force-driven mitochondrial ATP synthesis"/>
    <property type="evidence" value="ECO:0007669"/>
    <property type="project" value="TreeGrafter"/>
</dbReference>
<dbReference type="CDD" id="cd18110">
    <property type="entry name" value="ATP-synt_F1_beta_C"/>
    <property type="match status" value="1"/>
</dbReference>
<dbReference type="CDD" id="cd18115">
    <property type="entry name" value="ATP-synt_F1_beta_N"/>
    <property type="match status" value="1"/>
</dbReference>
<dbReference type="CDD" id="cd01133">
    <property type="entry name" value="F1-ATPase_beta_CD"/>
    <property type="match status" value="1"/>
</dbReference>
<dbReference type="FunFam" id="1.10.1140.10:FF:000001">
    <property type="entry name" value="ATP synthase subunit beta"/>
    <property type="match status" value="1"/>
</dbReference>
<dbReference type="FunFam" id="3.40.50.12240:FF:000006">
    <property type="entry name" value="ATP synthase subunit beta"/>
    <property type="match status" value="1"/>
</dbReference>
<dbReference type="FunFam" id="3.40.50.300:FF:000026">
    <property type="entry name" value="ATP synthase subunit beta"/>
    <property type="match status" value="1"/>
</dbReference>
<dbReference type="Gene3D" id="2.40.10.170">
    <property type="match status" value="1"/>
</dbReference>
<dbReference type="Gene3D" id="1.10.1140.10">
    <property type="entry name" value="Bovine Mitochondrial F1-atpase, Atp Synthase Beta Chain, Chain D, domain 3"/>
    <property type="match status" value="1"/>
</dbReference>
<dbReference type="Gene3D" id="3.40.50.300">
    <property type="entry name" value="P-loop containing nucleotide triphosphate hydrolases"/>
    <property type="match status" value="1"/>
</dbReference>
<dbReference type="HAMAP" id="MF_01347">
    <property type="entry name" value="ATP_synth_beta_bact"/>
    <property type="match status" value="1"/>
</dbReference>
<dbReference type="InterPro" id="IPR003593">
    <property type="entry name" value="AAA+_ATPase"/>
</dbReference>
<dbReference type="InterPro" id="IPR055190">
    <property type="entry name" value="ATP-synt_VA_C"/>
</dbReference>
<dbReference type="InterPro" id="IPR005722">
    <property type="entry name" value="ATP_synth_F1_bsu"/>
</dbReference>
<dbReference type="InterPro" id="IPR020003">
    <property type="entry name" value="ATPase_a/bsu_AS"/>
</dbReference>
<dbReference type="InterPro" id="IPR050053">
    <property type="entry name" value="ATPase_alpha/beta_chains"/>
</dbReference>
<dbReference type="InterPro" id="IPR004100">
    <property type="entry name" value="ATPase_F1/V1/A1_a/bsu_N"/>
</dbReference>
<dbReference type="InterPro" id="IPR036121">
    <property type="entry name" value="ATPase_F1/V1/A1_a/bsu_N_sf"/>
</dbReference>
<dbReference type="InterPro" id="IPR000194">
    <property type="entry name" value="ATPase_F1/V1/A1_a/bsu_nucl-bd"/>
</dbReference>
<dbReference type="InterPro" id="IPR024034">
    <property type="entry name" value="ATPase_F1/V1_b/a_C"/>
</dbReference>
<dbReference type="InterPro" id="IPR027417">
    <property type="entry name" value="P-loop_NTPase"/>
</dbReference>
<dbReference type="NCBIfam" id="TIGR01039">
    <property type="entry name" value="atpD"/>
    <property type="match status" value="1"/>
</dbReference>
<dbReference type="PANTHER" id="PTHR15184">
    <property type="entry name" value="ATP SYNTHASE"/>
    <property type="match status" value="1"/>
</dbReference>
<dbReference type="PANTHER" id="PTHR15184:SF71">
    <property type="entry name" value="ATP SYNTHASE SUBUNIT BETA, MITOCHONDRIAL"/>
    <property type="match status" value="1"/>
</dbReference>
<dbReference type="Pfam" id="PF00006">
    <property type="entry name" value="ATP-synt_ab"/>
    <property type="match status" value="1"/>
</dbReference>
<dbReference type="Pfam" id="PF02874">
    <property type="entry name" value="ATP-synt_ab_N"/>
    <property type="match status" value="1"/>
</dbReference>
<dbReference type="Pfam" id="PF22919">
    <property type="entry name" value="ATP-synt_VA_C"/>
    <property type="match status" value="1"/>
</dbReference>
<dbReference type="SMART" id="SM00382">
    <property type="entry name" value="AAA"/>
    <property type="match status" value="1"/>
</dbReference>
<dbReference type="SUPFAM" id="SSF47917">
    <property type="entry name" value="C-terminal domain of alpha and beta subunits of F1 ATP synthase"/>
    <property type="match status" value="1"/>
</dbReference>
<dbReference type="SUPFAM" id="SSF50615">
    <property type="entry name" value="N-terminal domain of alpha and beta subunits of F1 ATP synthase"/>
    <property type="match status" value="1"/>
</dbReference>
<dbReference type="SUPFAM" id="SSF52540">
    <property type="entry name" value="P-loop containing nucleoside triphosphate hydrolases"/>
    <property type="match status" value="1"/>
</dbReference>
<dbReference type="PROSITE" id="PS00152">
    <property type="entry name" value="ATPASE_ALPHA_BETA"/>
    <property type="match status" value="1"/>
</dbReference>
<protein>
    <recommendedName>
        <fullName evidence="1">ATP synthase subunit beta, chloroplastic</fullName>
        <ecNumber evidence="1">7.1.2.2</ecNumber>
    </recommendedName>
    <alternativeName>
        <fullName evidence="1">ATP synthase F1 sector subunit beta</fullName>
    </alternativeName>
    <alternativeName>
        <fullName evidence="1">F-ATPase subunit beta</fullName>
    </alternativeName>
</protein>
<sequence length="475" mass="51621">MVKTNLNKGYVTQIIGPVLDIKFSEGNLPPIYSAIKIILDDNTETIVEVQQLLGDNKVRAVSMRSTDGLKRGVEAIDLGTPINVPVGTPTLGRIFNVIGEPVDEQGEVKYDETLPIHRDAPAFTELETKPSIFETGIKVVDLLAPYRRGGKIGLFGGAGVGKTVLIMELINNIAKAHGGVSVFGGVGERTREGNDLYEEMKESGVINEKNFAESKVALVYGQMNEPPGARMRVGLTALTMAEYFRDVNKQDVLLFIDNIFRFTQAGSEVSALLGRMPSAVGYQPTLATEMGALQERITSTTQGSITSIQAVYVPADDLTDPAPATTFAHLDATTVLSRGLAAKGIYPAVDPLDSTSTMLQVGIVTEEHYATAENVKETLQRYKELQDIIAILGIDELSEEDRLTVARARKVERFLSQPFFVAEIFTGSPGEYVSLEDTIKGFLMVLNGELDDLPEQAFYLVGNIDQAIAKAETLK</sequence>
<feature type="chain" id="PRO_0000275189" description="ATP synthase subunit beta, chloroplastic">
    <location>
        <begin position="1"/>
        <end position="475"/>
    </location>
</feature>
<feature type="binding site" evidence="1">
    <location>
        <begin position="156"/>
        <end position="163"/>
    </location>
    <ligand>
        <name>ATP</name>
        <dbReference type="ChEBI" id="CHEBI:30616"/>
    </ligand>
</feature>
<organism>
    <name type="scientific">Phaeodactylum tricornutum (strain CCAP 1055/1)</name>
    <dbReference type="NCBI Taxonomy" id="556484"/>
    <lineage>
        <taxon>Eukaryota</taxon>
        <taxon>Sar</taxon>
        <taxon>Stramenopiles</taxon>
        <taxon>Ochrophyta</taxon>
        <taxon>Bacillariophyta</taxon>
        <taxon>Bacillariophyceae</taxon>
        <taxon>Bacillariophycidae</taxon>
        <taxon>Naviculales</taxon>
        <taxon>Phaeodactylaceae</taxon>
        <taxon>Phaeodactylum</taxon>
    </lineage>
</organism>
<accession>A0T0D2</accession>
<reference key="1">
    <citation type="journal article" date="2007" name="Mol. Genet. Genomics">
        <title>Chloroplast genomes of the diatoms Phaeodactylum tricornutum and Thalassiosira pseudonana: comparison with other plastid genomes of the red lineage.</title>
        <authorList>
            <person name="Oudot-Le Secq M.-P."/>
            <person name="Grimwood J."/>
            <person name="Shapiro H."/>
            <person name="Armbrust E.V."/>
            <person name="Bowler C."/>
            <person name="Green B.R."/>
        </authorList>
    </citation>
    <scope>NUCLEOTIDE SEQUENCE [LARGE SCALE GENOMIC DNA]</scope>
    <source>
        <strain>CCAP 1055/1</strain>
    </source>
</reference>
<proteinExistence type="inferred from homology"/>
<gene>
    <name evidence="1" type="primary">atpB</name>
</gene>
<comment type="function">
    <text evidence="1">Produces ATP from ADP in the presence of a proton gradient across the membrane. The catalytic sites are hosted primarily by the beta subunits.</text>
</comment>
<comment type="catalytic activity">
    <reaction evidence="1">
        <text>ATP + H2O + 4 H(+)(in) = ADP + phosphate + 5 H(+)(out)</text>
        <dbReference type="Rhea" id="RHEA:57720"/>
        <dbReference type="ChEBI" id="CHEBI:15377"/>
        <dbReference type="ChEBI" id="CHEBI:15378"/>
        <dbReference type="ChEBI" id="CHEBI:30616"/>
        <dbReference type="ChEBI" id="CHEBI:43474"/>
        <dbReference type="ChEBI" id="CHEBI:456216"/>
        <dbReference type="EC" id="7.1.2.2"/>
    </reaction>
</comment>
<comment type="subunit">
    <text evidence="1">F-type ATPases have 2 components, CF(1) - the catalytic core - and CF(0) - the membrane proton channel. CF(1) has five subunits: alpha(3), beta(3), gamma(1), delta(1), epsilon(1). CF(0) has four main subunits: a(1), b(1), b'(1) and c(9-12).</text>
</comment>
<comment type="subcellular location">
    <subcellularLocation>
        <location evidence="1">Plastid</location>
        <location evidence="1">Chloroplast thylakoid membrane</location>
        <topology evidence="1">Peripheral membrane protein</topology>
    </subcellularLocation>
</comment>
<comment type="similarity">
    <text evidence="1">Belongs to the ATPase alpha/beta chains family.</text>
</comment>
<geneLocation type="chloroplast"/>